<keyword id="KW-0963">Cytoplasm</keyword>
<keyword id="KW-0444">Lipid biosynthesis</keyword>
<keyword id="KW-0443">Lipid metabolism</keyword>
<keyword id="KW-0489">Methyltransferase</keyword>
<keyword id="KW-1185">Reference proteome</keyword>
<keyword id="KW-0949">S-adenosyl-L-methionine</keyword>
<keyword id="KW-0808">Transferase</keyword>
<proteinExistence type="inferred from homology"/>
<gene>
    <name type="primary">pcaA</name>
    <name type="synonym">cma3</name>
    <name type="synonym">cmaA3</name>
    <name type="synonym">CMAS-3</name>
    <name type="ordered locus">MT0486</name>
</gene>
<sequence length="287" mass="33028">MSVQLTPHFGNVQAHYDLSDDFFRLFLDPTQTYSCAYFERDDMTLQEAQIAKIDLALGKLNLEPGMTLLDIGCGWGATMRRAIEKYDVNVVGLTLSENQAGHVQKMFDQMDTPRSRRVLLEGWEKFDEPVDRIVSIGAFEHFGHQRYHHFFEVTHRTLPADGKMLLHTIVRPTFKEGREKGLTLTHELVHFTKFILAEIFPGGWLPSIPTVHEYAEKVGFRVTAVQSLQLHYARTLDMWATALEANKDQAIAIQSQTVYDRYMKYLTGCAKLFRQGYTDVDQFTLEK</sequence>
<dbReference type="EC" id="2.1.1.79"/>
<dbReference type="EMBL" id="AE000516">
    <property type="protein sequence ID" value="AAK44709.1"/>
    <property type="molecule type" value="Genomic_DNA"/>
</dbReference>
<dbReference type="PIR" id="B70829">
    <property type="entry name" value="B70829"/>
</dbReference>
<dbReference type="RefSeq" id="WP_003402323.1">
    <property type="nucleotide sequence ID" value="NZ_KK341227.1"/>
</dbReference>
<dbReference type="SMR" id="P9WPB2"/>
<dbReference type="GeneID" id="45424432"/>
<dbReference type="KEGG" id="mtc:MT0486"/>
<dbReference type="PATRIC" id="fig|83331.31.peg.516"/>
<dbReference type="HOGENOM" id="CLU_026434_3_0_11"/>
<dbReference type="UniPathway" id="UPA00915"/>
<dbReference type="Proteomes" id="UP000001020">
    <property type="component" value="Chromosome"/>
</dbReference>
<dbReference type="GO" id="GO:0005737">
    <property type="term" value="C:cytoplasm"/>
    <property type="evidence" value="ECO:0007669"/>
    <property type="project" value="UniProtKB-SubCell"/>
</dbReference>
<dbReference type="GO" id="GO:0008825">
    <property type="term" value="F:cyclopropane-fatty-acyl-phospholipid synthase activity"/>
    <property type="evidence" value="ECO:0007669"/>
    <property type="project" value="UniProtKB-EC"/>
</dbReference>
<dbReference type="GO" id="GO:0008610">
    <property type="term" value="P:lipid biosynthetic process"/>
    <property type="evidence" value="ECO:0007669"/>
    <property type="project" value="InterPro"/>
</dbReference>
<dbReference type="GO" id="GO:0032259">
    <property type="term" value="P:methylation"/>
    <property type="evidence" value="ECO:0007669"/>
    <property type="project" value="UniProtKB-KW"/>
</dbReference>
<dbReference type="CDD" id="cd02440">
    <property type="entry name" value="AdoMet_MTases"/>
    <property type="match status" value="1"/>
</dbReference>
<dbReference type="FunFam" id="3.40.50.150:FF:000115">
    <property type="entry name" value="Cyclopropane mycolic acid synthase 1"/>
    <property type="match status" value="1"/>
</dbReference>
<dbReference type="Gene3D" id="3.40.50.150">
    <property type="entry name" value="Vaccinia Virus protein VP39"/>
    <property type="match status" value="1"/>
</dbReference>
<dbReference type="InterPro" id="IPR050723">
    <property type="entry name" value="CFA/CMAS"/>
</dbReference>
<dbReference type="InterPro" id="IPR003333">
    <property type="entry name" value="CMAS"/>
</dbReference>
<dbReference type="InterPro" id="IPR047672">
    <property type="entry name" value="CMAS_actinobact"/>
</dbReference>
<dbReference type="InterPro" id="IPR029063">
    <property type="entry name" value="SAM-dependent_MTases_sf"/>
</dbReference>
<dbReference type="NCBIfam" id="NF040660">
    <property type="entry name" value="mycolic_MTase"/>
    <property type="match status" value="1"/>
</dbReference>
<dbReference type="PANTHER" id="PTHR43667">
    <property type="entry name" value="CYCLOPROPANE-FATTY-ACYL-PHOSPHOLIPID SYNTHASE"/>
    <property type="match status" value="1"/>
</dbReference>
<dbReference type="PANTHER" id="PTHR43667:SF1">
    <property type="entry name" value="CYCLOPROPANE-FATTY-ACYL-PHOSPHOLIPID SYNTHASE"/>
    <property type="match status" value="1"/>
</dbReference>
<dbReference type="Pfam" id="PF02353">
    <property type="entry name" value="CMAS"/>
    <property type="match status" value="1"/>
</dbReference>
<dbReference type="PIRSF" id="PIRSF003085">
    <property type="entry name" value="CMAS"/>
    <property type="match status" value="1"/>
</dbReference>
<dbReference type="SUPFAM" id="SSF53335">
    <property type="entry name" value="S-adenosyl-L-methionine-dependent methyltransferases"/>
    <property type="match status" value="1"/>
</dbReference>
<protein>
    <recommendedName>
        <fullName>Cyclopropane mycolic acid synthase 3</fullName>
        <shortName>CMAS</shortName>
        <ecNumber>2.1.1.79</ecNumber>
    </recommendedName>
    <alternativeName>
        <fullName>Cyclopropane-fatty-acyl-phospholipid synthase</fullName>
        <shortName>CFA synthase</shortName>
        <shortName>Cyclopropane fatty acid synthase</shortName>
    </alternativeName>
    <alternativeName>
        <fullName>Mycolic acid methyltransferase</fullName>
        <shortName>MA-MT</shortName>
    </alternativeName>
    <alternativeName>
        <fullName>S-adenosylmethionine-dependent methyltransferase</fullName>
        <shortName>AdoMet-MT</shortName>
        <shortName>SAM-MT</shortName>
    </alternativeName>
</protein>
<feature type="chain" id="PRO_0000426982" description="Cyclopropane mycolic acid synthase 3">
    <location>
        <begin position="1"/>
        <end position="287"/>
    </location>
</feature>
<feature type="active site" evidence="1">
    <location>
        <position position="269"/>
    </location>
</feature>
<feature type="binding site" evidence="1">
    <location>
        <begin position="33"/>
        <end position="34"/>
    </location>
    <ligand>
        <name>S-adenosyl-L-methionine</name>
        <dbReference type="ChEBI" id="CHEBI:59789"/>
    </ligand>
</feature>
<feature type="binding site" evidence="1">
    <location>
        <begin position="68"/>
        <end position="76"/>
    </location>
    <ligand>
        <name>S-adenosyl-L-methionine</name>
        <dbReference type="ChEBI" id="CHEBI:59789"/>
    </ligand>
</feature>
<feature type="binding site" evidence="1">
    <location>
        <begin position="94"/>
        <end position="99"/>
    </location>
    <ligand>
        <name>S-adenosyl-L-methionine</name>
        <dbReference type="ChEBI" id="CHEBI:59789"/>
    </ligand>
</feature>
<feature type="binding site" evidence="1">
    <location>
        <begin position="123"/>
        <end position="124"/>
    </location>
    <ligand>
        <name>S-adenosyl-L-methionine</name>
        <dbReference type="ChEBI" id="CHEBI:59789"/>
    </ligand>
</feature>
<comment type="function">
    <text evidence="1">Involved in the phagosome maturation block (PMB). Catalyzes the conversion of a double bond to a cyclopropane ring at the proximal position of an alpha mycolic acid via the transfer of a methylene group from S-adenosyl-L-methionine. It can use cis, cis 11,14-eicosadienoic acid and linoelaidic acid as substrate. Cyclopropanated mycolic acids are key factors participating in cell envelope permeability, host immunomodulation and persistence (By similarity).</text>
</comment>
<comment type="catalytic activity">
    <reaction>
        <text>a 1-acyl-2-(9Z)-enoyl-sn-glycero-3-phospholipid + S-adenosyl-L-methionine = a 1-acyl-2-(9-cyclopronane)-acyl-sn-glycero-3-phospholipid + S-adenosyl-L-homocysteine + H(+)</text>
        <dbReference type="Rhea" id="RHEA:11988"/>
        <dbReference type="ChEBI" id="CHEBI:15378"/>
        <dbReference type="ChEBI" id="CHEBI:57856"/>
        <dbReference type="ChEBI" id="CHEBI:59789"/>
        <dbReference type="ChEBI" id="CHEBI:76593"/>
        <dbReference type="ChEBI" id="CHEBI:76594"/>
        <dbReference type="EC" id="2.1.1.79"/>
    </reaction>
</comment>
<comment type="pathway">
    <text>Lipid metabolism; mycolic acid biosynthesis.</text>
</comment>
<comment type="subunit">
    <text evidence="1">Homodimer.</text>
</comment>
<comment type="subcellular location">
    <subcellularLocation>
        <location evidence="1">Cytoplasm</location>
    </subcellularLocation>
</comment>
<comment type="similarity">
    <text evidence="2">Belongs to the CFA/CMAS family.</text>
</comment>
<evidence type="ECO:0000250" key="1"/>
<evidence type="ECO:0000305" key="2"/>
<accession>P9WPB2</accession>
<accession>L0T6K4</accession>
<accession>Q6MX38</accession>
<accession>Q7D9R5</accession>
<reference key="1">
    <citation type="journal article" date="2002" name="J. Bacteriol.">
        <title>Whole-genome comparison of Mycobacterium tuberculosis clinical and laboratory strains.</title>
        <authorList>
            <person name="Fleischmann R.D."/>
            <person name="Alland D."/>
            <person name="Eisen J.A."/>
            <person name="Carpenter L."/>
            <person name="White O."/>
            <person name="Peterson J.D."/>
            <person name="DeBoy R.T."/>
            <person name="Dodson R.J."/>
            <person name="Gwinn M.L."/>
            <person name="Haft D.H."/>
            <person name="Hickey E.K."/>
            <person name="Kolonay J.F."/>
            <person name="Nelson W.C."/>
            <person name="Umayam L.A."/>
            <person name="Ermolaeva M.D."/>
            <person name="Salzberg S.L."/>
            <person name="Delcher A."/>
            <person name="Utterback T.R."/>
            <person name="Weidman J.F."/>
            <person name="Khouri H.M."/>
            <person name="Gill J."/>
            <person name="Mikula A."/>
            <person name="Bishai W."/>
            <person name="Jacobs W.R. Jr."/>
            <person name="Venter J.C."/>
            <person name="Fraser C.M."/>
        </authorList>
    </citation>
    <scope>NUCLEOTIDE SEQUENCE [LARGE SCALE GENOMIC DNA]</scope>
    <source>
        <strain>CDC 1551 / Oshkosh</strain>
    </source>
</reference>
<name>CMAS3_MYCTO</name>
<organism>
    <name type="scientific">Mycobacterium tuberculosis (strain CDC 1551 / Oshkosh)</name>
    <dbReference type="NCBI Taxonomy" id="83331"/>
    <lineage>
        <taxon>Bacteria</taxon>
        <taxon>Bacillati</taxon>
        <taxon>Actinomycetota</taxon>
        <taxon>Actinomycetes</taxon>
        <taxon>Mycobacteriales</taxon>
        <taxon>Mycobacteriaceae</taxon>
        <taxon>Mycobacterium</taxon>
        <taxon>Mycobacterium tuberculosis complex</taxon>
    </lineage>
</organism>